<protein>
    <recommendedName>
        <fullName evidence="1">3-phosphoshikimate 1-carboxyvinyltransferase</fullName>
        <ecNumber evidence="1">2.5.1.19</ecNumber>
    </recommendedName>
    <alternativeName>
        <fullName evidence="1">5-enolpyruvylshikimate-3-phosphate synthase</fullName>
        <shortName evidence="1">EPSP synthase</shortName>
        <shortName evidence="1">EPSPS</shortName>
    </alternativeName>
</protein>
<comment type="function">
    <text evidence="1">Catalyzes the transfer of the enolpyruvyl moiety of phosphoenolpyruvate (PEP) to the 5-hydroxyl of shikimate-3-phosphate (S3P) to produce enolpyruvyl shikimate-3-phosphate and inorganic phosphate.</text>
</comment>
<comment type="catalytic activity">
    <reaction evidence="1">
        <text>3-phosphoshikimate + phosphoenolpyruvate = 5-O-(1-carboxyvinyl)-3-phosphoshikimate + phosphate</text>
        <dbReference type="Rhea" id="RHEA:21256"/>
        <dbReference type="ChEBI" id="CHEBI:43474"/>
        <dbReference type="ChEBI" id="CHEBI:57701"/>
        <dbReference type="ChEBI" id="CHEBI:58702"/>
        <dbReference type="ChEBI" id="CHEBI:145989"/>
        <dbReference type="EC" id="2.5.1.19"/>
    </reaction>
    <physiologicalReaction direction="left-to-right" evidence="1">
        <dbReference type="Rhea" id="RHEA:21257"/>
    </physiologicalReaction>
</comment>
<comment type="pathway">
    <text evidence="1">Metabolic intermediate biosynthesis; chorismate biosynthesis; chorismate from D-erythrose 4-phosphate and phosphoenolpyruvate: step 6/7.</text>
</comment>
<comment type="subunit">
    <text evidence="1">Monomer.</text>
</comment>
<comment type="subcellular location">
    <subcellularLocation>
        <location evidence="1">Cytoplasm</location>
    </subcellularLocation>
</comment>
<comment type="similarity">
    <text evidence="1">Belongs to the EPSP synthase family.</text>
</comment>
<name>AROA_HELP2</name>
<evidence type="ECO:0000255" key="1">
    <source>
        <dbReference type="HAMAP-Rule" id="MF_00210"/>
    </source>
</evidence>
<accession>B6JMP3</accession>
<keyword id="KW-0028">Amino-acid biosynthesis</keyword>
<keyword id="KW-0057">Aromatic amino acid biosynthesis</keyword>
<keyword id="KW-0963">Cytoplasm</keyword>
<keyword id="KW-0808">Transferase</keyword>
<proteinExistence type="inferred from homology"/>
<gene>
    <name evidence="1" type="primary">aroA</name>
    <name type="ordered locus">HPP12_1019</name>
</gene>
<dbReference type="EC" id="2.5.1.19" evidence="1"/>
<dbReference type="EMBL" id="CP001217">
    <property type="protein sequence ID" value="ACJ08171.1"/>
    <property type="molecule type" value="Genomic_DNA"/>
</dbReference>
<dbReference type="SMR" id="B6JMP3"/>
<dbReference type="KEGG" id="hpp:HPP12_1019"/>
<dbReference type="HOGENOM" id="CLU_024321_0_1_7"/>
<dbReference type="UniPathway" id="UPA00053">
    <property type="reaction ID" value="UER00089"/>
</dbReference>
<dbReference type="Proteomes" id="UP000008198">
    <property type="component" value="Chromosome"/>
</dbReference>
<dbReference type="GO" id="GO:0005737">
    <property type="term" value="C:cytoplasm"/>
    <property type="evidence" value="ECO:0007669"/>
    <property type="project" value="UniProtKB-SubCell"/>
</dbReference>
<dbReference type="GO" id="GO:0003866">
    <property type="term" value="F:3-phosphoshikimate 1-carboxyvinyltransferase activity"/>
    <property type="evidence" value="ECO:0007669"/>
    <property type="project" value="UniProtKB-UniRule"/>
</dbReference>
<dbReference type="GO" id="GO:0008652">
    <property type="term" value="P:amino acid biosynthetic process"/>
    <property type="evidence" value="ECO:0007669"/>
    <property type="project" value="UniProtKB-KW"/>
</dbReference>
<dbReference type="GO" id="GO:0009073">
    <property type="term" value="P:aromatic amino acid family biosynthetic process"/>
    <property type="evidence" value="ECO:0007669"/>
    <property type="project" value="UniProtKB-KW"/>
</dbReference>
<dbReference type="GO" id="GO:0009423">
    <property type="term" value="P:chorismate biosynthetic process"/>
    <property type="evidence" value="ECO:0007669"/>
    <property type="project" value="UniProtKB-UniRule"/>
</dbReference>
<dbReference type="CDD" id="cd01556">
    <property type="entry name" value="EPSP_synthase"/>
    <property type="match status" value="1"/>
</dbReference>
<dbReference type="FunFam" id="3.65.10.10:FF:000005">
    <property type="entry name" value="3-phosphoshikimate 1-carboxyvinyltransferase"/>
    <property type="match status" value="1"/>
</dbReference>
<dbReference type="Gene3D" id="3.65.10.10">
    <property type="entry name" value="Enolpyruvate transferase domain"/>
    <property type="match status" value="2"/>
</dbReference>
<dbReference type="HAMAP" id="MF_00210">
    <property type="entry name" value="EPSP_synth"/>
    <property type="match status" value="1"/>
</dbReference>
<dbReference type="InterPro" id="IPR001986">
    <property type="entry name" value="Enolpyruvate_Tfrase_dom"/>
</dbReference>
<dbReference type="InterPro" id="IPR036968">
    <property type="entry name" value="Enolpyruvate_Tfrase_sf"/>
</dbReference>
<dbReference type="InterPro" id="IPR006264">
    <property type="entry name" value="EPSP_synthase"/>
</dbReference>
<dbReference type="InterPro" id="IPR023193">
    <property type="entry name" value="EPSP_synthase_CS"/>
</dbReference>
<dbReference type="InterPro" id="IPR013792">
    <property type="entry name" value="RNA3'P_cycl/enolpyr_Trfase_a/b"/>
</dbReference>
<dbReference type="NCBIfam" id="TIGR01356">
    <property type="entry name" value="aroA"/>
    <property type="match status" value="1"/>
</dbReference>
<dbReference type="PANTHER" id="PTHR21090">
    <property type="entry name" value="AROM/DEHYDROQUINATE SYNTHASE"/>
    <property type="match status" value="1"/>
</dbReference>
<dbReference type="PANTHER" id="PTHR21090:SF5">
    <property type="entry name" value="PENTAFUNCTIONAL AROM POLYPEPTIDE"/>
    <property type="match status" value="1"/>
</dbReference>
<dbReference type="Pfam" id="PF00275">
    <property type="entry name" value="EPSP_synthase"/>
    <property type="match status" value="1"/>
</dbReference>
<dbReference type="PIRSF" id="PIRSF000505">
    <property type="entry name" value="EPSPS"/>
    <property type="match status" value="1"/>
</dbReference>
<dbReference type="SUPFAM" id="SSF55205">
    <property type="entry name" value="EPT/RTPC-like"/>
    <property type="match status" value="1"/>
</dbReference>
<dbReference type="PROSITE" id="PS00104">
    <property type="entry name" value="EPSP_SYNTHASE_1"/>
    <property type="match status" value="1"/>
</dbReference>
<dbReference type="PROSITE" id="PS00885">
    <property type="entry name" value="EPSP_SYNTHASE_2"/>
    <property type="match status" value="1"/>
</dbReference>
<organism>
    <name type="scientific">Helicobacter pylori (strain P12)</name>
    <dbReference type="NCBI Taxonomy" id="570508"/>
    <lineage>
        <taxon>Bacteria</taxon>
        <taxon>Pseudomonadati</taxon>
        <taxon>Campylobacterota</taxon>
        <taxon>Epsilonproteobacteria</taxon>
        <taxon>Campylobacterales</taxon>
        <taxon>Helicobacteraceae</taxon>
        <taxon>Helicobacter</taxon>
    </lineage>
</organism>
<reference key="1">
    <citation type="submission" date="2008-10" db="EMBL/GenBank/DDBJ databases">
        <title>The complete genome sequence of Helicobacter pylori strain P12.</title>
        <authorList>
            <person name="Fischer W."/>
            <person name="Windhager L."/>
            <person name="Karnholz A."/>
            <person name="Zeiller M."/>
            <person name="Zimmer R."/>
            <person name="Haas R."/>
        </authorList>
    </citation>
    <scope>NUCLEOTIDE SEQUENCE [LARGE SCALE GENOMIC DNA]</scope>
    <source>
        <strain>P12</strain>
    </source>
</reference>
<feature type="chain" id="PRO_1000099705" description="3-phosphoshikimate 1-carboxyvinyltransferase">
    <location>
        <begin position="1"/>
        <end position="429"/>
    </location>
</feature>
<feature type="active site" description="Proton acceptor" evidence="1">
    <location>
        <position position="302"/>
    </location>
</feature>
<feature type="binding site" evidence="1">
    <location>
        <position position="11"/>
    </location>
    <ligand>
        <name>3-phosphoshikimate</name>
        <dbReference type="ChEBI" id="CHEBI:145989"/>
    </ligand>
</feature>
<feature type="binding site" evidence="1">
    <location>
        <position position="11"/>
    </location>
    <ligand>
        <name>phosphoenolpyruvate</name>
        <dbReference type="ChEBI" id="CHEBI:58702"/>
    </ligand>
</feature>
<feature type="binding site" evidence="1">
    <location>
        <position position="12"/>
    </location>
    <ligand>
        <name>3-phosphoshikimate</name>
        <dbReference type="ChEBI" id="CHEBI:145989"/>
    </ligand>
</feature>
<feature type="binding site" evidence="1">
    <location>
        <position position="16"/>
    </location>
    <ligand>
        <name>3-phosphoshikimate</name>
        <dbReference type="ChEBI" id="CHEBI:145989"/>
    </ligand>
</feature>
<feature type="binding site" evidence="1">
    <location>
        <position position="82"/>
    </location>
    <ligand>
        <name>phosphoenolpyruvate</name>
        <dbReference type="ChEBI" id="CHEBI:58702"/>
    </ligand>
</feature>
<feature type="binding site" evidence="1">
    <location>
        <position position="110"/>
    </location>
    <ligand>
        <name>phosphoenolpyruvate</name>
        <dbReference type="ChEBI" id="CHEBI:58702"/>
    </ligand>
</feature>
<feature type="binding site" evidence="1">
    <location>
        <position position="155"/>
    </location>
    <ligand>
        <name>3-phosphoshikimate</name>
        <dbReference type="ChEBI" id="CHEBI:145989"/>
    </ligand>
</feature>
<feature type="binding site" evidence="1">
    <location>
        <position position="157"/>
    </location>
    <ligand>
        <name>3-phosphoshikimate</name>
        <dbReference type="ChEBI" id="CHEBI:145989"/>
    </ligand>
</feature>
<feature type="binding site" evidence="1">
    <location>
        <position position="157"/>
    </location>
    <ligand>
        <name>phosphoenolpyruvate</name>
        <dbReference type="ChEBI" id="CHEBI:58702"/>
    </ligand>
</feature>
<feature type="binding site" evidence="1">
    <location>
        <position position="302"/>
    </location>
    <ligand>
        <name>3-phosphoshikimate</name>
        <dbReference type="ChEBI" id="CHEBI:145989"/>
    </ligand>
</feature>
<feature type="binding site" evidence="1">
    <location>
        <position position="329"/>
    </location>
    <ligand>
        <name>3-phosphoshikimate</name>
        <dbReference type="ChEBI" id="CHEBI:145989"/>
    </ligand>
</feature>
<feature type="binding site" evidence="1">
    <location>
        <position position="333"/>
    </location>
    <ligand>
        <name>phosphoenolpyruvate</name>
        <dbReference type="ChEBI" id="CHEBI:58702"/>
    </ligand>
</feature>
<feature type="binding site" evidence="1">
    <location>
        <position position="385"/>
    </location>
    <ligand>
        <name>phosphoenolpyruvate</name>
        <dbReference type="ChEBI" id="CHEBI:58702"/>
    </ligand>
</feature>
<sequence>MIELDINASDKSLSHRAVIFSLLAQKPCVVRNFLMGEDCLSSLEIAQNLGAKVENTAKNSFKITPPTAIKEPSKILNCNNSGTSMRLYSGLLSAQKGLFVLSGDNSLNSRPMKRIIEPLKAFEARILGREDNHFAPLVIVGSPLKACNYESPIASAQVKSAFILSALQAQGSSTYKENELSRNHTEIMLKSLGADIQDQNGVLMVSPLEKPLEAFDFTIANDPSSAFFFALACAITPKSRLLLKNVLLNPTRIGAFEALKKMGASIEYAIQSKNLEMIGDIYIEHAPLKAINIEQNIASLIDEIPALSIAMLFAKGKSMVRNAKDLRAKESDRIKAVVSNFKALGIECEEFEDGFYVEGLEDISPLKQRFSQKKPPLIKSFNDHRIAMSFAVLTLALPLEIDNLECANISFPQFKRLLNLFKKGSLNGN</sequence>